<feature type="chain" id="PRO_0000269361" description="Large ribosomal subunit protein bL21">
    <location>
        <begin position="1"/>
        <end position="129"/>
    </location>
</feature>
<accession>Q7V5W5</accession>
<protein>
    <recommendedName>
        <fullName evidence="1">Large ribosomal subunit protein bL21</fullName>
    </recommendedName>
    <alternativeName>
        <fullName evidence="2">50S ribosomal protein L21</fullName>
    </alternativeName>
</protein>
<gene>
    <name evidence="1" type="primary">rplU</name>
    <name evidence="1" type="synonym">rpl21</name>
    <name type="ordered locus">PMT_1420</name>
</gene>
<dbReference type="EMBL" id="BX548175">
    <property type="protein sequence ID" value="CAE21595.1"/>
    <property type="molecule type" value="Genomic_DNA"/>
</dbReference>
<dbReference type="RefSeq" id="WP_011130788.1">
    <property type="nucleotide sequence ID" value="NC_005071.1"/>
</dbReference>
<dbReference type="SMR" id="Q7V5W5"/>
<dbReference type="KEGG" id="pmt:PMT_1420"/>
<dbReference type="eggNOG" id="COG0261">
    <property type="taxonomic scope" value="Bacteria"/>
</dbReference>
<dbReference type="HOGENOM" id="CLU_061463_6_0_3"/>
<dbReference type="OrthoDB" id="9813334at2"/>
<dbReference type="Proteomes" id="UP000001423">
    <property type="component" value="Chromosome"/>
</dbReference>
<dbReference type="GO" id="GO:0005737">
    <property type="term" value="C:cytoplasm"/>
    <property type="evidence" value="ECO:0007669"/>
    <property type="project" value="UniProtKB-ARBA"/>
</dbReference>
<dbReference type="GO" id="GO:1990904">
    <property type="term" value="C:ribonucleoprotein complex"/>
    <property type="evidence" value="ECO:0007669"/>
    <property type="project" value="UniProtKB-KW"/>
</dbReference>
<dbReference type="GO" id="GO:0005840">
    <property type="term" value="C:ribosome"/>
    <property type="evidence" value="ECO:0007669"/>
    <property type="project" value="UniProtKB-KW"/>
</dbReference>
<dbReference type="GO" id="GO:0019843">
    <property type="term" value="F:rRNA binding"/>
    <property type="evidence" value="ECO:0007669"/>
    <property type="project" value="UniProtKB-UniRule"/>
</dbReference>
<dbReference type="GO" id="GO:0003735">
    <property type="term" value="F:structural constituent of ribosome"/>
    <property type="evidence" value="ECO:0007669"/>
    <property type="project" value="InterPro"/>
</dbReference>
<dbReference type="GO" id="GO:0006412">
    <property type="term" value="P:translation"/>
    <property type="evidence" value="ECO:0007669"/>
    <property type="project" value="UniProtKB-UniRule"/>
</dbReference>
<dbReference type="HAMAP" id="MF_01363">
    <property type="entry name" value="Ribosomal_bL21"/>
    <property type="match status" value="1"/>
</dbReference>
<dbReference type="InterPro" id="IPR028909">
    <property type="entry name" value="bL21-like"/>
</dbReference>
<dbReference type="InterPro" id="IPR036164">
    <property type="entry name" value="bL21-like_sf"/>
</dbReference>
<dbReference type="InterPro" id="IPR001787">
    <property type="entry name" value="Ribosomal_bL21"/>
</dbReference>
<dbReference type="InterPro" id="IPR018258">
    <property type="entry name" value="Ribosomal_bL21_CS"/>
</dbReference>
<dbReference type="NCBIfam" id="TIGR00061">
    <property type="entry name" value="L21"/>
    <property type="match status" value="1"/>
</dbReference>
<dbReference type="PANTHER" id="PTHR21349">
    <property type="entry name" value="50S RIBOSOMAL PROTEIN L21"/>
    <property type="match status" value="1"/>
</dbReference>
<dbReference type="PANTHER" id="PTHR21349:SF0">
    <property type="entry name" value="LARGE RIBOSOMAL SUBUNIT PROTEIN BL21M"/>
    <property type="match status" value="1"/>
</dbReference>
<dbReference type="Pfam" id="PF00829">
    <property type="entry name" value="Ribosomal_L21p"/>
    <property type="match status" value="1"/>
</dbReference>
<dbReference type="SUPFAM" id="SSF141091">
    <property type="entry name" value="L21p-like"/>
    <property type="match status" value="1"/>
</dbReference>
<dbReference type="PROSITE" id="PS01169">
    <property type="entry name" value="RIBOSOMAL_L21"/>
    <property type="match status" value="1"/>
</dbReference>
<sequence>MAEKPTAKPKAAEAKDQSDSYAIVEASGQQFLLQPNRYYDLDRLQAAVDDTVTLEKVLLIKDGKNDATVGQPYVKGASVELKVMDHRRGPKIIVYKMRPKKKTRRKNGHRQELTRVMVQSISIDGKALS</sequence>
<evidence type="ECO:0000255" key="1">
    <source>
        <dbReference type="HAMAP-Rule" id="MF_01363"/>
    </source>
</evidence>
<evidence type="ECO:0000305" key="2"/>
<keyword id="KW-1185">Reference proteome</keyword>
<keyword id="KW-0687">Ribonucleoprotein</keyword>
<keyword id="KW-0689">Ribosomal protein</keyword>
<keyword id="KW-0694">RNA-binding</keyword>
<keyword id="KW-0699">rRNA-binding</keyword>
<reference key="1">
    <citation type="journal article" date="2003" name="Nature">
        <title>Genome divergence in two Prochlorococcus ecotypes reflects oceanic niche differentiation.</title>
        <authorList>
            <person name="Rocap G."/>
            <person name="Larimer F.W."/>
            <person name="Lamerdin J.E."/>
            <person name="Malfatti S."/>
            <person name="Chain P."/>
            <person name="Ahlgren N.A."/>
            <person name="Arellano A."/>
            <person name="Coleman M."/>
            <person name="Hauser L."/>
            <person name="Hess W.R."/>
            <person name="Johnson Z.I."/>
            <person name="Land M.L."/>
            <person name="Lindell D."/>
            <person name="Post A.F."/>
            <person name="Regala W."/>
            <person name="Shah M."/>
            <person name="Shaw S.L."/>
            <person name="Steglich C."/>
            <person name="Sullivan M.B."/>
            <person name="Ting C.S."/>
            <person name="Tolonen A."/>
            <person name="Webb E.A."/>
            <person name="Zinser E.R."/>
            <person name="Chisholm S.W."/>
        </authorList>
    </citation>
    <scope>NUCLEOTIDE SEQUENCE [LARGE SCALE GENOMIC DNA]</scope>
    <source>
        <strain>MIT 9313</strain>
    </source>
</reference>
<comment type="function">
    <text evidence="1">This protein binds to 23S rRNA in the presence of protein L20.</text>
</comment>
<comment type="subunit">
    <text evidence="1">Part of the 50S ribosomal subunit. Contacts protein L20.</text>
</comment>
<comment type="similarity">
    <text evidence="1">Belongs to the bacterial ribosomal protein bL21 family.</text>
</comment>
<proteinExistence type="inferred from homology"/>
<organism>
    <name type="scientific">Prochlorococcus marinus (strain MIT 9313)</name>
    <dbReference type="NCBI Taxonomy" id="74547"/>
    <lineage>
        <taxon>Bacteria</taxon>
        <taxon>Bacillati</taxon>
        <taxon>Cyanobacteriota</taxon>
        <taxon>Cyanophyceae</taxon>
        <taxon>Synechococcales</taxon>
        <taxon>Prochlorococcaceae</taxon>
        <taxon>Prochlorococcus</taxon>
    </lineage>
</organism>
<name>RL21_PROMM</name>